<name>Y4632_PSEU2</name>
<feature type="chain" id="PRO_1000066875" description="UPF0229 protein Psyr_4632">
    <location>
        <begin position="1"/>
        <end position="423"/>
    </location>
</feature>
<feature type="region of interest" description="Disordered" evidence="2">
    <location>
        <begin position="65"/>
        <end position="110"/>
    </location>
</feature>
<feature type="compositionally biased region" description="Gly residues" evidence="2">
    <location>
        <begin position="92"/>
        <end position="107"/>
    </location>
</feature>
<dbReference type="EMBL" id="CP000075">
    <property type="protein sequence ID" value="AAY39662.1"/>
    <property type="molecule type" value="Genomic_DNA"/>
</dbReference>
<dbReference type="RefSeq" id="WP_011269137.1">
    <property type="nucleotide sequence ID" value="NC_007005.1"/>
</dbReference>
<dbReference type="RefSeq" id="YP_237700.1">
    <property type="nucleotide sequence ID" value="NC_007005.1"/>
</dbReference>
<dbReference type="SMR" id="Q4ZMG0"/>
<dbReference type="STRING" id="205918.Psyr_4632"/>
<dbReference type="KEGG" id="psb:Psyr_4632"/>
<dbReference type="PATRIC" id="fig|205918.7.peg.4777"/>
<dbReference type="eggNOG" id="COG2718">
    <property type="taxonomic scope" value="Bacteria"/>
</dbReference>
<dbReference type="HOGENOM" id="CLU_049702_0_0_6"/>
<dbReference type="OrthoDB" id="9788289at2"/>
<dbReference type="Proteomes" id="UP000000426">
    <property type="component" value="Chromosome"/>
</dbReference>
<dbReference type="HAMAP" id="MF_01232">
    <property type="entry name" value="UPF0229"/>
    <property type="match status" value="1"/>
</dbReference>
<dbReference type="InterPro" id="IPR006698">
    <property type="entry name" value="UPF0229"/>
</dbReference>
<dbReference type="InterPro" id="IPR036465">
    <property type="entry name" value="vWFA_dom_sf"/>
</dbReference>
<dbReference type="NCBIfam" id="NF003707">
    <property type="entry name" value="PRK05325.1-2"/>
    <property type="match status" value="1"/>
</dbReference>
<dbReference type="NCBIfam" id="NF003708">
    <property type="entry name" value="PRK05325.1-3"/>
    <property type="match status" value="1"/>
</dbReference>
<dbReference type="PANTHER" id="PTHR30510">
    <property type="entry name" value="UPF0229 PROTEIN YEAH"/>
    <property type="match status" value="1"/>
</dbReference>
<dbReference type="PANTHER" id="PTHR30510:SF2">
    <property type="entry name" value="UPF0229 PROTEIN YEAH"/>
    <property type="match status" value="1"/>
</dbReference>
<dbReference type="Pfam" id="PF04285">
    <property type="entry name" value="DUF444"/>
    <property type="match status" value="1"/>
</dbReference>
<dbReference type="SUPFAM" id="SSF53300">
    <property type="entry name" value="vWA-like"/>
    <property type="match status" value="1"/>
</dbReference>
<comment type="similarity">
    <text evidence="1">Belongs to the UPF0229 family.</text>
</comment>
<gene>
    <name type="ordered locus">Psyr_4632</name>
</gene>
<protein>
    <recommendedName>
        <fullName evidence="1">UPF0229 protein Psyr_4632</fullName>
    </recommendedName>
</protein>
<sequence>MSYVIDRRLNGKNKSTVNRQRFLRRYRDHIKKAVEEAVSRRSITDMEHGEQISIPGRDIDEPVLHHGRGGKQTVVHPGNKEFTTGEHIARPQGGGGGKGPGKAGNSGEGMDEFSFQITQEEFLEFMFEDLELPNLVKRNLTGTDTFKTVRAGISNEGNPSRINIIRTLRSAHARRIALSGSSRAKLREATAELERMKREEPDNFGDIQELEVEIDRLKARIRRVPYLDTFDLKYNLLVKQPNPSSKAVMFCLMDVSGSMTQATKDIAKRFFILLYLFLKRNYDKIDVVFIRHHTSAREVDEEEFFYSRETGGTIVSSALKLMQEIMAARYPSSDWNIYAAQASDGDNWNDDSPICREILTKQIMPFVQYYTYVEITPREHQALWYEYERIGEDFADTFAQQQLVSAGDIYPVFRELFQRRLVS</sequence>
<accession>Q4ZMG0</accession>
<organism>
    <name type="scientific">Pseudomonas syringae pv. syringae (strain B728a)</name>
    <dbReference type="NCBI Taxonomy" id="205918"/>
    <lineage>
        <taxon>Bacteria</taxon>
        <taxon>Pseudomonadati</taxon>
        <taxon>Pseudomonadota</taxon>
        <taxon>Gammaproteobacteria</taxon>
        <taxon>Pseudomonadales</taxon>
        <taxon>Pseudomonadaceae</taxon>
        <taxon>Pseudomonas</taxon>
        <taxon>Pseudomonas syringae</taxon>
    </lineage>
</organism>
<evidence type="ECO:0000255" key="1">
    <source>
        <dbReference type="HAMAP-Rule" id="MF_01232"/>
    </source>
</evidence>
<evidence type="ECO:0000256" key="2">
    <source>
        <dbReference type="SAM" id="MobiDB-lite"/>
    </source>
</evidence>
<proteinExistence type="inferred from homology"/>
<reference key="1">
    <citation type="journal article" date="2005" name="Proc. Natl. Acad. Sci. U.S.A.">
        <title>Comparison of the complete genome sequences of Pseudomonas syringae pv. syringae B728a and pv. tomato DC3000.</title>
        <authorList>
            <person name="Feil H."/>
            <person name="Feil W.S."/>
            <person name="Chain P."/>
            <person name="Larimer F."/>
            <person name="Dibartolo G."/>
            <person name="Copeland A."/>
            <person name="Lykidis A."/>
            <person name="Trong S."/>
            <person name="Nolan M."/>
            <person name="Goltsman E."/>
            <person name="Thiel J."/>
            <person name="Malfatti S."/>
            <person name="Loper J.E."/>
            <person name="Lapidus A."/>
            <person name="Detter J.C."/>
            <person name="Land M."/>
            <person name="Richardson P.M."/>
            <person name="Kyrpides N.C."/>
            <person name="Ivanova N."/>
            <person name="Lindow S.E."/>
        </authorList>
    </citation>
    <scope>NUCLEOTIDE SEQUENCE [LARGE SCALE GENOMIC DNA]</scope>
    <source>
        <strain>B728a</strain>
    </source>
</reference>